<proteinExistence type="inferred from homology"/>
<dbReference type="EC" id="2.1.3.15" evidence="1"/>
<dbReference type="EMBL" id="CP000243">
    <property type="protein sequence ID" value="ABE05710.1"/>
    <property type="molecule type" value="Genomic_DNA"/>
</dbReference>
<dbReference type="RefSeq" id="WP_000055742.1">
    <property type="nucleotide sequence ID" value="NZ_CP064825.1"/>
</dbReference>
<dbReference type="SMR" id="Q1RG04"/>
<dbReference type="KEGG" id="eci:UTI89_C0200"/>
<dbReference type="HOGENOM" id="CLU_015486_0_2_6"/>
<dbReference type="UniPathway" id="UPA00655">
    <property type="reaction ID" value="UER00711"/>
</dbReference>
<dbReference type="Proteomes" id="UP000001952">
    <property type="component" value="Chromosome"/>
</dbReference>
<dbReference type="GO" id="GO:0009317">
    <property type="term" value="C:acetyl-CoA carboxylase complex"/>
    <property type="evidence" value="ECO:0007669"/>
    <property type="project" value="InterPro"/>
</dbReference>
<dbReference type="GO" id="GO:0003989">
    <property type="term" value="F:acetyl-CoA carboxylase activity"/>
    <property type="evidence" value="ECO:0007669"/>
    <property type="project" value="InterPro"/>
</dbReference>
<dbReference type="GO" id="GO:0005524">
    <property type="term" value="F:ATP binding"/>
    <property type="evidence" value="ECO:0007669"/>
    <property type="project" value="UniProtKB-KW"/>
</dbReference>
<dbReference type="GO" id="GO:0016743">
    <property type="term" value="F:carboxyl- or carbamoyltransferase activity"/>
    <property type="evidence" value="ECO:0007669"/>
    <property type="project" value="UniProtKB-UniRule"/>
</dbReference>
<dbReference type="GO" id="GO:0006633">
    <property type="term" value="P:fatty acid biosynthetic process"/>
    <property type="evidence" value="ECO:0007669"/>
    <property type="project" value="UniProtKB-KW"/>
</dbReference>
<dbReference type="GO" id="GO:2001295">
    <property type="term" value="P:malonyl-CoA biosynthetic process"/>
    <property type="evidence" value="ECO:0007669"/>
    <property type="project" value="UniProtKB-UniRule"/>
</dbReference>
<dbReference type="FunFam" id="3.90.226.10:FF:000008">
    <property type="entry name" value="Acetyl-coenzyme A carboxylase carboxyl transferase subunit alpha"/>
    <property type="match status" value="1"/>
</dbReference>
<dbReference type="Gene3D" id="3.90.226.10">
    <property type="entry name" value="2-enoyl-CoA Hydratase, Chain A, domain 1"/>
    <property type="match status" value="1"/>
</dbReference>
<dbReference type="HAMAP" id="MF_00823">
    <property type="entry name" value="AcetylCoA_CT_alpha"/>
    <property type="match status" value="1"/>
</dbReference>
<dbReference type="InterPro" id="IPR001095">
    <property type="entry name" value="Acetyl_CoA_COase_a_su"/>
</dbReference>
<dbReference type="InterPro" id="IPR029045">
    <property type="entry name" value="ClpP/crotonase-like_dom_sf"/>
</dbReference>
<dbReference type="InterPro" id="IPR011763">
    <property type="entry name" value="COA_CT_C"/>
</dbReference>
<dbReference type="NCBIfam" id="TIGR00513">
    <property type="entry name" value="accA"/>
    <property type="match status" value="1"/>
</dbReference>
<dbReference type="NCBIfam" id="NF041504">
    <property type="entry name" value="AccA_sub"/>
    <property type="match status" value="1"/>
</dbReference>
<dbReference type="NCBIfam" id="NF004344">
    <property type="entry name" value="PRK05724.1"/>
    <property type="match status" value="1"/>
</dbReference>
<dbReference type="PANTHER" id="PTHR42853">
    <property type="entry name" value="ACETYL-COENZYME A CARBOXYLASE CARBOXYL TRANSFERASE SUBUNIT ALPHA"/>
    <property type="match status" value="1"/>
</dbReference>
<dbReference type="PANTHER" id="PTHR42853:SF3">
    <property type="entry name" value="ACETYL-COENZYME A CARBOXYLASE CARBOXYL TRANSFERASE SUBUNIT ALPHA, CHLOROPLASTIC"/>
    <property type="match status" value="1"/>
</dbReference>
<dbReference type="Pfam" id="PF03255">
    <property type="entry name" value="ACCA"/>
    <property type="match status" value="1"/>
</dbReference>
<dbReference type="PRINTS" id="PR01069">
    <property type="entry name" value="ACCCTRFRASEA"/>
</dbReference>
<dbReference type="SUPFAM" id="SSF52096">
    <property type="entry name" value="ClpP/crotonase"/>
    <property type="match status" value="1"/>
</dbReference>
<dbReference type="PROSITE" id="PS50989">
    <property type="entry name" value="COA_CT_CTER"/>
    <property type="match status" value="1"/>
</dbReference>
<feature type="chain" id="PRO_1000062615" description="Acetyl-coenzyme A carboxylase carboxyl transferase subunit alpha">
    <location>
        <begin position="1"/>
        <end position="319"/>
    </location>
</feature>
<feature type="domain" description="CoA carboxyltransferase C-terminal" evidence="2">
    <location>
        <begin position="35"/>
        <end position="296"/>
    </location>
</feature>
<comment type="function">
    <text evidence="1">Component of the acetyl coenzyme A carboxylase (ACC) complex. First, biotin carboxylase catalyzes the carboxylation of biotin on its carrier protein (BCCP) and then the CO(2) group is transferred by the carboxyltransferase to acetyl-CoA to form malonyl-CoA.</text>
</comment>
<comment type="catalytic activity">
    <reaction evidence="1">
        <text>N(6)-carboxybiotinyl-L-lysyl-[protein] + acetyl-CoA = N(6)-biotinyl-L-lysyl-[protein] + malonyl-CoA</text>
        <dbReference type="Rhea" id="RHEA:54728"/>
        <dbReference type="Rhea" id="RHEA-COMP:10505"/>
        <dbReference type="Rhea" id="RHEA-COMP:10506"/>
        <dbReference type="ChEBI" id="CHEBI:57288"/>
        <dbReference type="ChEBI" id="CHEBI:57384"/>
        <dbReference type="ChEBI" id="CHEBI:83144"/>
        <dbReference type="ChEBI" id="CHEBI:83145"/>
        <dbReference type="EC" id="2.1.3.15"/>
    </reaction>
</comment>
<comment type="pathway">
    <text evidence="1">Lipid metabolism; malonyl-CoA biosynthesis; malonyl-CoA from acetyl-CoA: step 1/1.</text>
</comment>
<comment type="subunit">
    <text evidence="1">Acetyl-CoA carboxylase is a heterohexamer composed of biotin carboxyl carrier protein (AccB), biotin carboxylase (AccC) and two subunits each of ACCase subunit alpha (AccA) and ACCase subunit beta (AccD).</text>
</comment>
<comment type="subcellular location">
    <subcellularLocation>
        <location evidence="1">Cytoplasm</location>
    </subcellularLocation>
</comment>
<comment type="similarity">
    <text evidence="1">Belongs to the AccA family.</text>
</comment>
<name>ACCA_ECOUT</name>
<gene>
    <name evidence="1" type="primary">accA</name>
    <name type="ordered locus">UTI89_C0200</name>
</gene>
<keyword id="KW-0067">ATP-binding</keyword>
<keyword id="KW-0963">Cytoplasm</keyword>
<keyword id="KW-0275">Fatty acid biosynthesis</keyword>
<keyword id="KW-0276">Fatty acid metabolism</keyword>
<keyword id="KW-0444">Lipid biosynthesis</keyword>
<keyword id="KW-0443">Lipid metabolism</keyword>
<keyword id="KW-0547">Nucleotide-binding</keyword>
<keyword id="KW-0808">Transferase</keyword>
<evidence type="ECO:0000255" key="1">
    <source>
        <dbReference type="HAMAP-Rule" id="MF_00823"/>
    </source>
</evidence>
<evidence type="ECO:0000255" key="2">
    <source>
        <dbReference type="PROSITE-ProRule" id="PRU01137"/>
    </source>
</evidence>
<accession>Q1RG04</accession>
<organism>
    <name type="scientific">Escherichia coli (strain UTI89 / UPEC)</name>
    <dbReference type="NCBI Taxonomy" id="364106"/>
    <lineage>
        <taxon>Bacteria</taxon>
        <taxon>Pseudomonadati</taxon>
        <taxon>Pseudomonadota</taxon>
        <taxon>Gammaproteobacteria</taxon>
        <taxon>Enterobacterales</taxon>
        <taxon>Enterobacteriaceae</taxon>
        <taxon>Escherichia</taxon>
    </lineage>
</organism>
<protein>
    <recommendedName>
        <fullName evidence="1">Acetyl-coenzyme A carboxylase carboxyl transferase subunit alpha</fullName>
        <shortName evidence="1">ACCase subunit alpha</shortName>
        <shortName evidence="1">Acetyl-CoA carboxylase carboxyltransferase subunit alpha</shortName>
        <ecNumber evidence="1">2.1.3.15</ecNumber>
    </recommendedName>
</protein>
<reference key="1">
    <citation type="journal article" date="2006" name="Proc. Natl. Acad. Sci. U.S.A.">
        <title>Identification of genes subject to positive selection in uropathogenic strains of Escherichia coli: a comparative genomics approach.</title>
        <authorList>
            <person name="Chen S.L."/>
            <person name="Hung C.-S."/>
            <person name="Xu J."/>
            <person name="Reigstad C.S."/>
            <person name="Magrini V."/>
            <person name="Sabo A."/>
            <person name="Blasiar D."/>
            <person name="Bieri T."/>
            <person name="Meyer R.R."/>
            <person name="Ozersky P."/>
            <person name="Armstrong J.R."/>
            <person name="Fulton R.S."/>
            <person name="Latreille J.P."/>
            <person name="Spieth J."/>
            <person name="Hooton T.M."/>
            <person name="Mardis E.R."/>
            <person name="Hultgren S.J."/>
            <person name="Gordon J.I."/>
        </authorList>
    </citation>
    <scope>NUCLEOTIDE SEQUENCE [LARGE SCALE GENOMIC DNA]</scope>
    <source>
        <strain>UTI89 / UPEC</strain>
    </source>
</reference>
<sequence>MSLNFLDFEQPIAELEAKIDSLTAVSRQDEKLDINIDEEVHRLREKSVELTRKIFADLGAWQIAQLARHPQRPYTLDYVRLAFDEFDELAGDRAYADDKAIVGGIARLDGRPVMIIGHQKGRETKEKIRRNFGMPAPEGYRKALRLMQMAERFKMPIITFIDTPGAYPGVGAEERGQSEAIARNLREMSRLGVPVVCTVIGEGGSGGALAIGVGDKVNMLQYSTYSVISPEGCASILWKSADKAPLAAEAMGIIAPRLKELKLIDSIIPEPLGGAHRNPEAMAASLKAQLLTDLADLDVLSTEDLKNRRYQRLMSYGYA</sequence>